<feature type="chain" id="PRO_0000244078" description="Calcium load-activated calcium channel">
    <location>
        <begin position="1"/>
        <end position="188"/>
    </location>
</feature>
<feature type="topological domain" description="Lumenal" evidence="6">
    <location>
        <begin position="1"/>
        <end position="4"/>
    </location>
</feature>
<feature type="transmembrane region" description="Helical" evidence="1">
    <location>
        <begin position="5"/>
        <end position="32"/>
    </location>
</feature>
<feature type="topological domain" description="Cytoplasmic" evidence="6">
    <location>
        <begin position="33"/>
        <end position="86"/>
    </location>
</feature>
<feature type="transmembrane region" description="Helical" evidence="1">
    <location>
        <begin position="87"/>
        <end position="106"/>
    </location>
</feature>
<feature type="topological domain" description="Lumenal" evidence="6">
    <location>
        <begin position="107"/>
        <end position="120"/>
    </location>
</feature>
<feature type="intramembrane region" evidence="1">
    <location>
        <begin position="121"/>
        <end position="130"/>
    </location>
</feature>
<feature type="topological domain" description="Lumenal" evidence="6">
    <location>
        <begin position="131"/>
        <end position="140"/>
    </location>
</feature>
<feature type="transmembrane region" description="Helical" evidence="1">
    <location>
        <begin position="141"/>
        <end position="162"/>
    </location>
</feature>
<feature type="topological domain" description="Cytoplasmic" evidence="6">
    <location>
        <begin position="163"/>
        <end position="188"/>
    </location>
</feature>
<feature type="coiled-coil region" evidence="5">
    <location>
        <begin position="32"/>
        <end position="89"/>
    </location>
</feature>
<feature type="modified residue" description="Phosphoserine" evidence="4">
    <location>
        <position position="60"/>
    </location>
</feature>
<feature type="modified residue" description="Phosphoserine" evidence="4">
    <location>
        <position position="188"/>
    </location>
</feature>
<keyword id="KW-0106">Calcium</keyword>
<keyword id="KW-0107">Calcium channel</keyword>
<keyword id="KW-0109">Calcium transport</keyword>
<keyword id="KW-0175">Coiled coil</keyword>
<keyword id="KW-0256">Endoplasmic reticulum</keyword>
<keyword id="KW-0333">Golgi apparatus</keyword>
<keyword id="KW-0407">Ion channel</keyword>
<keyword id="KW-0406">Ion transport</keyword>
<keyword id="KW-0472">Membrane</keyword>
<keyword id="KW-0496">Mitochondrion</keyword>
<keyword id="KW-0597">Phosphoprotein</keyword>
<keyword id="KW-1185">Reference proteome</keyword>
<keyword id="KW-0812">Transmembrane</keyword>
<keyword id="KW-1133">Transmembrane helix</keyword>
<keyword id="KW-0813">Transport</keyword>
<protein>
    <recommendedName>
        <fullName evidence="4">Calcium load-activated calcium channel</fullName>
        <shortName evidence="4">CLAC channel</shortName>
    </recommendedName>
    <alternativeName>
        <fullName evidence="6">GEL complex subunit TMCO1</fullName>
    </alternativeName>
    <alternativeName>
        <fullName evidence="4">Transmembrane and coiled-coil domain-containing protein 1</fullName>
    </alternativeName>
</protein>
<proteinExistence type="evidence at transcript level"/>
<reference key="1">
    <citation type="submission" date="2004-11" db="EMBL/GenBank/DDBJ databases">
        <authorList>
            <consortium name="The German cDNA consortium"/>
        </authorList>
    </citation>
    <scope>NUCLEOTIDE SEQUENCE [LARGE SCALE MRNA]</scope>
    <source>
        <tissue>Brain cortex</tissue>
    </source>
</reference>
<reference key="2">
    <citation type="submission" date="2017-12" db="EMBL/GenBank/DDBJ databases">
        <title>High-resolution comparative analysis of great ape genomes.</title>
        <authorList>
            <person name="Pollen A."/>
            <person name="Hastie A."/>
            <person name="Hormozdiari F."/>
            <person name="Dougherty M."/>
            <person name="Liu R."/>
            <person name="Chaisson M."/>
            <person name="Hoppe E."/>
            <person name="Hill C."/>
            <person name="Pang A."/>
            <person name="Hillier L."/>
            <person name="Baker C."/>
            <person name="Armstrong J."/>
            <person name="Shendure J."/>
            <person name="Paten B."/>
            <person name="Wilson R."/>
            <person name="Chao H."/>
            <person name="Schneider V."/>
            <person name="Ventura M."/>
            <person name="Kronenberg Z."/>
            <person name="Murali S."/>
            <person name="Gordon D."/>
            <person name="Cantsilieris S."/>
            <person name="Munson K."/>
            <person name="Nelson B."/>
            <person name="Raja A."/>
            <person name="Underwood J."/>
            <person name="Diekhans M."/>
            <person name="Fiddes I."/>
            <person name="Haussler D."/>
            <person name="Eichler E."/>
        </authorList>
    </citation>
    <scope>NUCLEOTIDE SEQUENCE [LARGE SCALE GENOMIC DNA]</scope>
</reference>
<comment type="function">
    <text evidence="3 4">Endoplasmic reticulum (ER) calcium-selective channel preventing intracellular Ca2(+) stores from overfilling and maintaining calcium homeostasis in the ER. In response to endoplasmic reticulum (ER) Ca2(+) overloading, assembles into a homotetramer, forming a functional calcium-selective channel facilitating Ca2(+) release (By similarity). Mediates ER Ca2(+) homeostasis in osteoblasts and plays a key role in bone formation, via the CaMKII-HDAC4-RUNX2 signaling axis (By similarity). Component of the multi-pass translocon (MPT) complex that mediates insertion of multi-pass membrane proteins into the lipid bilayer of membranes (By similarity). The MPT complex takes over after the SEC61 complex: following membrane insertion of the first few transmembrane segments of proteins by the SEC61 complex, the MPT complex occludes the lateral gate of the SEC61 complex to promote insertion of subsequent transmembrane regions (By similarity). Within the MPT complex, the GEL subcomplex may mediate insertion of transmembrane regions into the membrane (By similarity).</text>
</comment>
<comment type="catalytic activity">
    <reaction evidence="4">
        <text>Ca(2+)(in) = Ca(2+)(out)</text>
        <dbReference type="Rhea" id="RHEA:29671"/>
        <dbReference type="ChEBI" id="CHEBI:29108"/>
    </reaction>
</comment>
<comment type="subunit">
    <text evidence="4">Homodimer and homotetramer. Homodimer under resting conditions; forms homotetramers following ER calcium overload. Component of the GET- and EMC-like (GEL) complex, composed of RAB5IF/OPTI and TMCO1. The GEL complex is part of the multi-pass translocon (MPT) complex, composed of three subcomplexes, the GEL complex (composed of RAB5IF/OPTI and TMCO1), the BOS complex (composed of NCLN/Nicalin, NOMO1 and TMEM147) and the PAT complex (composed of WDR83OS/Asterix and CCDC47). The MPT complex associates with the SEC61 complex.</text>
</comment>
<comment type="subcellular location">
    <subcellularLocation>
        <location evidence="4">Endoplasmic reticulum membrane</location>
        <topology evidence="4">Multi-pass membrane protein</topology>
    </subcellularLocation>
    <subcellularLocation>
        <location evidence="4">Golgi apparatus membrane</location>
        <topology evidence="4">Multi-pass membrane protein</topology>
    </subcellularLocation>
    <subcellularLocation>
        <location evidence="2">Mitochondrion membrane</location>
        <topology evidence="4">Multi-pass membrane protein</topology>
    </subcellularLocation>
    <text evidence="4">The first transmembrane region is required for localization to the endoplasmic reticulum.</text>
</comment>
<comment type="similarity">
    <text evidence="6">Belongs to the TMCO1 family.</text>
</comment>
<evidence type="ECO:0000250" key="1">
    <source>
        <dbReference type="UniProtKB" id="A0A8I3PI99"/>
    </source>
</evidence>
<evidence type="ECO:0000250" key="2">
    <source>
        <dbReference type="UniProtKB" id="C5HGF3"/>
    </source>
</evidence>
<evidence type="ECO:0000250" key="3">
    <source>
        <dbReference type="UniProtKB" id="Q921L3"/>
    </source>
</evidence>
<evidence type="ECO:0000250" key="4">
    <source>
        <dbReference type="UniProtKB" id="Q9UM00"/>
    </source>
</evidence>
<evidence type="ECO:0000255" key="5"/>
<evidence type="ECO:0000305" key="6"/>
<dbReference type="EMBL" id="CR859479">
    <property type="protein sequence ID" value="CAH91650.1"/>
    <property type="molecule type" value="mRNA"/>
</dbReference>
<dbReference type="EMBL" id="NDHI03003560">
    <property type="protein sequence ID" value="PNJ21477.1"/>
    <property type="molecule type" value="Genomic_DNA"/>
</dbReference>
<dbReference type="RefSeq" id="NP_001125969.1">
    <property type="nucleotide sequence ID" value="NM_001132497.1"/>
</dbReference>
<dbReference type="SMR" id="Q5R9B0"/>
<dbReference type="FunCoup" id="Q5R9B0">
    <property type="interactions" value="2311"/>
</dbReference>
<dbReference type="STRING" id="9601.ENSPPYP00000000661"/>
<dbReference type="GeneID" id="100172905"/>
<dbReference type="KEGG" id="pon:100172905"/>
<dbReference type="CTD" id="54499"/>
<dbReference type="eggNOG" id="KOG3312">
    <property type="taxonomic scope" value="Eukaryota"/>
</dbReference>
<dbReference type="InParanoid" id="Q5R9B0"/>
<dbReference type="OrthoDB" id="342726at2759"/>
<dbReference type="Proteomes" id="UP000001595">
    <property type="component" value="Unplaced"/>
</dbReference>
<dbReference type="GO" id="GO:0005789">
    <property type="term" value="C:endoplasmic reticulum membrane"/>
    <property type="evidence" value="ECO:0000250"/>
    <property type="project" value="UniProtKB"/>
</dbReference>
<dbReference type="GO" id="GO:0000139">
    <property type="term" value="C:Golgi membrane"/>
    <property type="evidence" value="ECO:0007669"/>
    <property type="project" value="UniProtKB-SubCell"/>
</dbReference>
<dbReference type="GO" id="GO:0031966">
    <property type="term" value="C:mitochondrial membrane"/>
    <property type="evidence" value="ECO:0007669"/>
    <property type="project" value="UniProtKB-SubCell"/>
</dbReference>
<dbReference type="GO" id="GO:0160064">
    <property type="term" value="C:multi-pass translocon complex"/>
    <property type="evidence" value="ECO:0000250"/>
    <property type="project" value="UniProtKB"/>
</dbReference>
<dbReference type="GO" id="GO:0005262">
    <property type="term" value="F:calcium channel activity"/>
    <property type="evidence" value="ECO:0000250"/>
    <property type="project" value="UniProtKB"/>
</dbReference>
<dbReference type="GO" id="GO:0043022">
    <property type="term" value="F:ribosome binding"/>
    <property type="evidence" value="ECO:0000250"/>
    <property type="project" value="UniProtKB"/>
</dbReference>
<dbReference type="GO" id="GO:0070588">
    <property type="term" value="P:calcium ion transmembrane transport"/>
    <property type="evidence" value="ECO:0000250"/>
    <property type="project" value="UniProtKB"/>
</dbReference>
<dbReference type="GO" id="GO:0032469">
    <property type="term" value="P:endoplasmic reticulum calcium ion homeostasis"/>
    <property type="evidence" value="ECO:0000250"/>
    <property type="project" value="UniProtKB"/>
</dbReference>
<dbReference type="GO" id="GO:0006983">
    <property type="term" value="P:ER overload response"/>
    <property type="evidence" value="ECO:0000250"/>
    <property type="project" value="UniProtKB"/>
</dbReference>
<dbReference type="GO" id="GO:0160063">
    <property type="term" value="P:multi-pass transmembrane protein insertion into ER membrane"/>
    <property type="evidence" value="ECO:0000250"/>
    <property type="project" value="UniProtKB"/>
</dbReference>
<dbReference type="GO" id="GO:0001503">
    <property type="term" value="P:ossification"/>
    <property type="evidence" value="ECO:0000250"/>
    <property type="project" value="UniProtKB"/>
</dbReference>
<dbReference type="InterPro" id="IPR002809">
    <property type="entry name" value="EMC3/TMCO1"/>
</dbReference>
<dbReference type="InterPro" id="IPR008559">
    <property type="entry name" value="TMCO1"/>
</dbReference>
<dbReference type="PANTHER" id="PTHR20917:SF0">
    <property type="entry name" value="CALCIUM LOAD-ACTIVATED CALCIUM CHANNEL"/>
    <property type="match status" value="1"/>
</dbReference>
<dbReference type="PANTHER" id="PTHR20917">
    <property type="entry name" value="PNAS-RELATED"/>
    <property type="match status" value="1"/>
</dbReference>
<dbReference type="Pfam" id="PF01956">
    <property type="entry name" value="EMC3_TMCO1"/>
    <property type="match status" value="1"/>
</dbReference>
<dbReference type="PIRSF" id="PIRSF023322">
    <property type="entry name" value="DUF841_euk"/>
    <property type="match status" value="1"/>
</dbReference>
<dbReference type="SMART" id="SM01415">
    <property type="entry name" value="DUF106"/>
    <property type="match status" value="1"/>
</dbReference>
<name>TMCO1_PONAB</name>
<accession>Q5R9B0</accession>
<accession>A0A2J8SL20</accession>
<organism>
    <name type="scientific">Pongo abelii</name>
    <name type="common">Sumatran orangutan</name>
    <name type="synonym">Pongo pygmaeus abelii</name>
    <dbReference type="NCBI Taxonomy" id="9601"/>
    <lineage>
        <taxon>Eukaryota</taxon>
        <taxon>Metazoa</taxon>
        <taxon>Chordata</taxon>
        <taxon>Craniata</taxon>
        <taxon>Vertebrata</taxon>
        <taxon>Euteleostomi</taxon>
        <taxon>Mammalia</taxon>
        <taxon>Eutheria</taxon>
        <taxon>Euarchontoglires</taxon>
        <taxon>Primates</taxon>
        <taxon>Haplorrhini</taxon>
        <taxon>Catarrhini</taxon>
        <taxon>Hominidae</taxon>
        <taxon>Pongo</taxon>
    </lineage>
</organism>
<gene>
    <name evidence="4" type="primary">TMCO1</name>
</gene>
<sequence length="188" mass="21175">MSTMFADTLLIVFISVCTALLAEGITWVLVYRTDKYKRLKAEVEKQSKKLEKKKETITESAGRQQKKKIERQEEKLKNNNRDLSMVRMKSMFAIGFCFTALMGMFNSIFDGRVVAKLPFTPLSYIQGLSHRNLLGDDTTDCSFIFLYILCTMSIRQNIQKILGLAPSRAATKQAGGFLGPPPPSGKFS</sequence>